<comment type="function">
    <text evidence="8 10 13 15">Required for homologous recombination and the bypass of mutagenic DNA lesions by the SOS response. Catalyzes ATP-driven homologous pairing and strand exchange of DNA molecules necessary for DNA recombinational repair. Catalyzes the hydrolysis of ATP in the presence of single-stranded DNA, the ATP-dependent uptake of single-stranded DNA by duplex DNA, and the ATP-dependent hybridization of homologous single-stranded DNAs. The SOS response controls an apoptotic-like death (ALD) induced (in the absence of the mazE-mazF toxin-antitoxin module) in response to DNA damaging agents that is mediated by RecA and LexA (PubMed:22412352).</text>
</comment>
<comment type="function">
    <text evidence="9">Mutations in this gene were selected in directed evolution experiments for resistance to intense ionizing radiation (3000 Gy).</text>
</comment>
<comment type="activity regulation">
    <text evidence="10">The rate of DNA-strand exchange is stimulated by RadA.</text>
</comment>
<comment type="subunit">
    <text evidence="4 5 6">Polymerizes non-specifically on ssDNA to form filaments; filament formation requires ATP or ATP-gamma-S. Interacts with and activates LexA leading to autocatalytic cleavage of LexA, which derepresses the SOS regulon and activates DNA repair. Interacts with the C-terminus of RecB, facilitating loading of RecA onto ssDNA at chi sites. Interaction is decreased by ATP.</text>
</comment>
<comment type="interaction">
    <interactant intactId="EBI-370331">
        <id>P0A7G6</id>
    </interactant>
    <interactant intactId="EBI-554913">
        <id>P23367</id>
        <label>mutL</label>
    </interactant>
    <organismsDiffer>false</organismsDiffer>
    <experiments>3</experiments>
</comment>
<comment type="subcellular location">
    <subcellularLocation>
        <location>Cytoplasm</location>
    </subcellularLocation>
</comment>
<comment type="induction">
    <text evidence="3 7 8 14">Induced by DNA damage, repressed by LexA (PubMed:10760155). Induced in response to low temperature (PubMed:8898389). Sensitive to temperature through changes in the linking number of the DNA. Induced by cold shock (42 to 15 degrees Celsius) (at protein level) (PubMed:8898389). 5.1-fold induced by hydroxyurea treatment (at protein level) (PubMed:20005847). mRNA levels are repressed in a mazE-mazF-mediated manner (PubMed:22412352).</text>
</comment>
<comment type="disruption phenotype">
    <text evidence="8">Triple mazE-mazF-recA mutant cells no longer undergo an apoptotic-like death upon DNA damage characterized by membrane depolarization.</text>
</comment>
<comment type="similarity">
    <text evidence="1">Belongs to the RecA family.</text>
</comment>
<keyword id="KW-0002">3D-structure</keyword>
<keyword id="KW-0067">ATP-binding</keyword>
<keyword id="KW-0963">Cytoplasm</keyword>
<keyword id="KW-0903">Direct protein sequencing</keyword>
<keyword id="KW-0227">DNA damage</keyword>
<keyword id="KW-0233">DNA recombination</keyword>
<keyword id="KW-0234">DNA repair</keyword>
<keyword id="KW-0238">DNA-binding</keyword>
<keyword id="KW-0547">Nucleotide-binding</keyword>
<keyword id="KW-1185">Reference proteome</keyword>
<keyword id="KW-0742">SOS response</keyword>
<keyword id="KW-0346">Stress response</keyword>
<evidence type="ECO:0000255" key="1">
    <source>
        <dbReference type="HAMAP-Rule" id="MF_00268"/>
    </source>
</evidence>
<evidence type="ECO:0000256" key="2">
    <source>
        <dbReference type="SAM" id="MobiDB-lite"/>
    </source>
</evidence>
<evidence type="ECO:0000269" key="3">
    <source>
    </source>
</evidence>
<evidence type="ECO:0000269" key="4">
    <source>
    </source>
</evidence>
<evidence type="ECO:0000269" key="5">
    <source>
    </source>
</evidence>
<evidence type="ECO:0000269" key="6">
    <source>
    </source>
</evidence>
<evidence type="ECO:0000269" key="7">
    <source>
    </source>
</evidence>
<evidence type="ECO:0000269" key="8">
    <source>
    </source>
</evidence>
<evidence type="ECO:0000269" key="9">
    <source>
    </source>
</evidence>
<evidence type="ECO:0000269" key="10">
    <source>
    </source>
</evidence>
<evidence type="ECO:0000269" key="11">
    <source>
    </source>
</evidence>
<evidence type="ECO:0000269" key="12">
    <source>
    </source>
</evidence>
<evidence type="ECO:0000269" key="13">
    <source>
    </source>
</evidence>
<evidence type="ECO:0000269" key="14">
    <source>
    </source>
</evidence>
<evidence type="ECO:0000269" key="15">
    <source>
    </source>
</evidence>
<evidence type="ECO:0000305" key="16"/>
<evidence type="ECO:0007829" key="17">
    <source>
        <dbReference type="PDB" id="1U94"/>
    </source>
</evidence>
<evidence type="ECO:0007829" key="18">
    <source>
        <dbReference type="PDB" id="1XMV"/>
    </source>
</evidence>
<evidence type="ECO:0007829" key="19">
    <source>
        <dbReference type="PDB" id="3CMW"/>
    </source>
</evidence>
<evidence type="ECO:0007829" key="20">
    <source>
        <dbReference type="PDB" id="7JY8"/>
    </source>
</evidence>
<evidence type="ECO:0007829" key="21">
    <source>
        <dbReference type="PDB" id="7JY9"/>
    </source>
</evidence>
<evidence type="ECO:0007829" key="22">
    <source>
        <dbReference type="PDB" id="8GMU"/>
    </source>
</evidence>
<name>RECA_ECOLI</name>
<proteinExistence type="evidence at protein level"/>
<sequence length="353" mass="37973">MAIDENKQKALAAALGQIEKQFGKGSIMRLGEDRSMDVETISTGSLSLDIALGAGGLPMGRIVEIYGPESSGKTTLTLQVIAAAQREGKTCAFIDAEHALDPIYARKLGVDIDNLLCSQPDTGEQALEICDALARSGAVDVIVVDSVAALTPKAEIEGEIGDSHMGLAARMMSQAMRKLAGNLKQSNTLLIFINQIRMKIGVMFGNPETTTGGNALKFYASVRLDIRRIGAVKEGENVVGSETRVKVVKNKIAAPFKQAEFQILYGEGINFYGELVDLGVKEKLIEKAGAWYSYKGEKIGQGKANATAWLKDNPETAKEIEKKVRELLLSNPNSTPDFSVDDSEGVAETNEDF</sequence>
<accession>P0A7G6</accession>
<accession>P03017</accession>
<accession>P26347</accession>
<accession>P78213</accession>
<reference key="1">
    <citation type="journal article" date="1980" name="Proc. Natl. Acad. Sci. U.S.A.">
        <title>Organization of the recA gene of Escherichia coli.</title>
        <authorList>
            <person name="Horii T."/>
            <person name="Ogawa T."/>
            <person name="Ogawa H."/>
        </authorList>
    </citation>
    <scope>NUCLEOTIDE SEQUENCE [GENOMIC DNA]</scope>
    <scope>PROTEIN SEQUENCE OF 2-6</scope>
</reference>
<reference key="2">
    <citation type="journal article" date="1980" name="Proc. Natl. Acad. Sci. U.S.A.">
        <title>Sequences of the recA gene and protein.</title>
        <authorList>
            <person name="Sancar A."/>
            <person name="Stachelek C."/>
            <person name="Konigsberg W."/>
            <person name="Rupp W.D."/>
        </authorList>
    </citation>
    <scope>NUCLEOTIDE SEQUENCE [GENOMIC DNA]</scope>
    <scope>PROTEIN SEQUENCE OF 2-3</scope>
</reference>
<reference key="3">
    <citation type="journal article" date="1990" name="Mol. Gen. Genet.">
        <title>DNA sequence analysis of the recA genes from Proteus vulgaris, Erwinia carotovora, Shigella flexneri and Escherichia coli B/r.</title>
        <authorList>
            <person name="Zhao X.J."/>
            <person name="McEntee K."/>
        </authorList>
    </citation>
    <scope>NUCLEOTIDE SEQUENCE [GENOMIC DNA]</scope>
</reference>
<reference key="4">
    <citation type="journal article" date="1997" name="DNA Res.">
        <title>Construction of a contiguous 874-kb sequence of the Escherichia coli-K12 genome corresponding to 50.0-68.8 min on the linkage map and analysis of its sequence features.</title>
        <authorList>
            <person name="Yamamoto Y."/>
            <person name="Aiba H."/>
            <person name="Baba T."/>
            <person name="Hayashi K."/>
            <person name="Inada T."/>
            <person name="Isono K."/>
            <person name="Itoh T."/>
            <person name="Kimura S."/>
            <person name="Kitagawa M."/>
            <person name="Makino K."/>
            <person name="Miki T."/>
            <person name="Mitsuhashi N."/>
            <person name="Mizobuchi K."/>
            <person name="Mori H."/>
            <person name="Nakade S."/>
            <person name="Nakamura Y."/>
            <person name="Nashimoto H."/>
            <person name="Oshima T."/>
            <person name="Oyama S."/>
            <person name="Saito N."/>
            <person name="Sampei G."/>
            <person name="Satoh Y."/>
            <person name="Sivasundaram S."/>
            <person name="Tagami H."/>
            <person name="Takahashi H."/>
            <person name="Takeda J."/>
            <person name="Takemoto K."/>
            <person name="Uehara K."/>
            <person name="Wada C."/>
            <person name="Yamagata S."/>
            <person name="Horiuchi T."/>
        </authorList>
    </citation>
    <scope>NUCLEOTIDE SEQUENCE [LARGE SCALE GENOMIC DNA]</scope>
    <source>
        <strain>K12 / W3110 / ATCC 27325 / DSM 5911</strain>
    </source>
</reference>
<reference key="5">
    <citation type="journal article" date="1997" name="Science">
        <title>The complete genome sequence of Escherichia coli K-12.</title>
        <authorList>
            <person name="Blattner F.R."/>
            <person name="Plunkett G. III"/>
            <person name="Bloch C.A."/>
            <person name="Perna N.T."/>
            <person name="Burland V."/>
            <person name="Riley M."/>
            <person name="Collado-Vides J."/>
            <person name="Glasner J.D."/>
            <person name="Rode C.K."/>
            <person name="Mayhew G.F."/>
            <person name="Gregor J."/>
            <person name="Davis N.W."/>
            <person name="Kirkpatrick H.A."/>
            <person name="Goeden M.A."/>
            <person name="Rose D.J."/>
            <person name="Mau B."/>
            <person name="Shao Y."/>
        </authorList>
    </citation>
    <scope>NUCLEOTIDE SEQUENCE [LARGE SCALE GENOMIC DNA]</scope>
    <source>
        <strain>K12 / MG1655 / ATCC 47076</strain>
    </source>
</reference>
<reference key="6">
    <citation type="journal article" date="2006" name="Mol. Syst. Biol.">
        <title>Highly accurate genome sequences of Escherichia coli K-12 strains MG1655 and W3110.</title>
        <authorList>
            <person name="Hayashi K."/>
            <person name="Morooka N."/>
            <person name="Yamamoto Y."/>
            <person name="Fujita K."/>
            <person name="Isono K."/>
            <person name="Choi S."/>
            <person name="Ohtsubo E."/>
            <person name="Baba T."/>
            <person name="Wanner B.L."/>
            <person name="Mori H."/>
            <person name="Horiuchi T."/>
        </authorList>
    </citation>
    <scope>NUCLEOTIDE SEQUENCE [LARGE SCALE GENOMIC DNA]</scope>
    <scope>SEQUENCE REVISION TO 112</scope>
    <source>
        <strain>K12 / W3110 / ATCC 27325 / DSM 5911</strain>
    </source>
</reference>
<reference key="7">
    <citation type="journal article" date="1995" name="Eur. J. Biochem.">
        <title>The DNA-binding site of the RecA protein. Photochemical cross-linking of Tyr103 to single-stranded DNA.</title>
        <authorList>
            <person name="Morimatsu K."/>
            <person name="Horii T."/>
        </authorList>
    </citation>
    <scope>PROTEIN SEQUENCE OF 90-107 AND 179-184</scope>
    <scope>DNA-BINDING</scope>
</reference>
<reference key="8">
    <citation type="journal article" date="1995" name="Eur. J. Biochem.">
        <title>The identification of the single-stranded DNA-binding domain of the Escherichia coli RecA protein.</title>
        <authorList>
            <person name="Gardner R.V."/>
            <person name="Voloshin O.N."/>
            <person name="Camerini-Otero R.D."/>
        </authorList>
    </citation>
    <scope>PROTEIN SEQUENCE OF 187-194</scope>
    <scope>DNA-BINDING</scope>
</reference>
<reference key="9">
    <citation type="journal article" date="1997" name="Electrophoresis">
        <title>Escherichia coli proteome analysis using the gene-protein database.</title>
        <authorList>
            <person name="VanBogelen R.A."/>
            <person name="Abshire K.Z."/>
            <person name="Moldover B."/>
            <person name="Olson E.R."/>
            <person name="Neidhardt F.C."/>
        </authorList>
    </citation>
    <scope>IDENTIFICATION BY 2D-GEL</scope>
</reference>
<reference key="10">
    <citation type="journal article" date="1995" name="J. Biol. Chem.">
        <title>Role of the Escherichia coli recombination hotspot, chi, in RecABCD-dependent homologous pairing.</title>
        <authorList>
            <person name="Dixon D.A."/>
            <person name="Kowalczykowski S.C."/>
        </authorList>
    </citation>
    <scope>FUNCTION IN HOMOLOGOUS RECOMBINATION</scope>
</reference>
<reference key="11">
    <citation type="journal article" date="1996" name="Mol. Microbiol.">
        <title>RbfA, a 30S ribosomal binding factor, is a cold-shock protein whose absence triggers the cold-shock response.</title>
        <authorList>
            <person name="Jones P.G."/>
            <person name="Inouye M."/>
        </authorList>
    </citation>
    <scope>INDUCTION BY COLD-SHOCK</scope>
    <source>
        <strain>CSH142</strain>
    </source>
</reference>
<reference key="12">
    <citation type="journal article" date="1997" name="Cell">
        <title>The translocating RecBCD enzyme stimulates recombination by directing RecA protein onto ssDNA in a chi-regulated manner.</title>
        <authorList>
            <person name="Anderson D.G."/>
            <person name="Kowalczykowski S.C."/>
        </authorList>
    </citation>
    <scope>FUNCTION WITH RECBCD</scope>
</reference>
<reference key="13">
    <citation type="journal article" date="2000" name="Mol. Microbiol.">
        <title>Identification of additional genes belonging to the LexA regulon in Escherichia coli.</title>
        <authorList>
            <person name="Fernandez De Henestrosa A.R."/>
            <person name="Ogi T."/>
            <person name="Aoyagi S."/>
            <person name="Chafin D."/>
            <person name="Hayes J.J."/>
            <person name="Ohmori H."/>
            <person name="Woodgate R."/>
        </authorList>
    </citation>
    <scope>REGULATION BY LEXA</scope>
    <scope>INDUCTION</scope>
    <source>
        <strain>K12 / RW118</strain>
    </source>
</reference>
<reference key="14">
    <citation type="journal article" date="2006" name="Mol. Cell">
        <title>The RecA binding locus of RecBCD is a general domain for recruitment of DNA strand exchange proteins.</title>
        <authorList>
            <person name="Spies M."/>
            <person name="Kowalczykowski S.C."/>
        </authorList>
    </citation>
    <scope>INTERACTION WITH RECB</scope>
    <scope>SUBUNIT</scope>
</reference>
<reference key="15">
    <citation type="journal article" date="2009" name="Mol. Cell">
        <title>Hydroxyurea induces hydroxyl radical-mediated cell death in Escherichia coli.</title>
        <authorList>
            <person name="Davies B.W."/>
            <person name="Kohanski M.A."/>
            <person name="Simmons L.A."/>
            <person name="Winkler J.A."/>
            <person name="Collins J.J."/>
            <person name="Walker G.C."/>
        </authorList>
    </citation>
    <scope>INDUCTION BY HYDROXYUREA</scope>
    <source>
        <strain>K12 / MC4100 / ATCC 35695 / DSM 6574</strain>
    </source>
</reference>
<reference key="16">
    <citation type="journal article" date="2012" name="PLoS Biol.">
        <title>Two programmed cell death systems in Escherichia coli: an apoptotic-like death is inhibited by the mazEF-mediated death pathway.</title>
        <authorList>
            <person name="Erental A."/>
            <person name="Sharon I."/>
            <person name="Engelberg-Kulka H."/>
        </authorList>
    </citation>
    <scope>FUNCTION</scope>
    <scope>INDUCTION</scope>
    <scope>DISRUPTION PHENOTYPE</scope>
    <source>
        <strain>K12 / MC4100 / ATCC 35695 / DSM 6574</strain>
    </source>
</reference>
<reference key="17">
    <citation type="journal article" date="2014" name="Elife">
        <title>Evolution of extreme resistance to ionizing radiation via genetic adaptation of DNA repair.</title>
        <authorList>
            <person name="Byrne R.T."/>
            <person name="Klingele A.J."/>
            <person name="Cabot E.L."/>
            <person name="Schackwitz W.S."/>
            <person name="Martin J.A."/>
            <person name="Martin J."/>
            <person name="Wang Z."/>
            <person name="Wood E.A."/>
            <person name="Pennacchio C."/>
            <person name="Pennacchio L.A."/>
            <person name="Perna N.T."/>
            <person name="Battista J.R."/>
            <person name="Cox M.M."/>
        </authorList>
    </citation>
    <scope>FUNCTION IN RADIATION RESISTANCE</scope>
    <scope>MUTAGENESIS OF ASP-277</scope>
    <source>
        <strain>K12</strain>
    </source>
</reference>
<reference key="18">
    <citation type="journal article" date="2016" name="Elife">
        <title>Recombinational branch migration by the RadA/Sms paralog of RecA in Escherichia coli.</title>
        <authorList>
            <person name="Cooper D.L."/>
            <person name="Lovett S.T."/>
        </authorList>
    </citation>
    <scope>FUNCTION</scope>
    <scope>ACTIVITY REGULATION</scope>
</reference>
<reference key="19">
    <citation type="journal article" date="1992" name="Nature">
        <title>The structure of the E. coli recA protein monomer and polymer.</title>
        <authorList>
            <person name="Story R.M."/>
            <person name="Weber I.T."/>
            <person name="Steitz T.A."/>
        </authorList>
    </citation>
    <scope>X-RAY CRYSTALLOGRAPHY (2.3 ANGSTROMS)</scope>
    <scope>SUBUNIT</scope>
</reference>
<reference key="20">
    <citation type="journal article" date="1992" name="Nature">
        <authorList>
            <person name="Story R.M."/>
            <person name="Weber I.T."/>
            <person name="Steitz T.A."/>
        </authorList>
    </citation>
    <scope>ERRATUM OF PUBMED:1731246</scope>
</reference>
<reference key="21">
    <citation type="journal article" date="1992" name="Nature">
        <title>Structure of the recA protein-ADP complex.</title>
        <authorList>
            <person name="Story R.M."/>
            <person name="Steitz T.A."/>
        </authorList>
    </citation>
    <scope>X-RAY CRYSTALLOGRAPHY (2.7 ANGSTROMS) OF 2-353 IN COMPLEX WITH ATP</scope>
</reference>
<reference key="22">
    <citation type="journal article" date="1997" name="Nat. Struct. Biol.">
        <title>The RecA hexamer is a structural homologue of ring helicases.</title>
        <authorList>
            <person name="Yu X."/>
            <person name="Egelman E.H."/>
        </authorList>
    </citation>
    <scope>X-RAY CRYSTALLOGRAPHY (2.3 ANGSTROMS)</scope>
</reference>
<protein>
    <recommendedName>
        <fullName evidence="1">Protein RecA</fullName>
    </recommendedName>
    <alternativeName>
        <fullName evidence="1">Recombinase A</fullName>
    </alternativeName>
</protein>
<dbReference type="EMBL" id="V00328">
    <property type="protein sequence ID" value="CAA23618.1"/>
    <property type="molecule type" value="Genomic_DNA"/>
</dbReference>
<dbReference type="EMBL" id="U00096">
    <property type="protein sequence ID" value="AAC75741.1"/>
    <property type="molecule type" value="Genomic_DNA"/>
</dbReference>
<dbReference type="EMBL" id="AP009048">
    <property type="protein sequence ID" value="BAA16561.2"/>
    <property type="molecule type" value="Genomic_DNA"/>
</dbReference>
<dbReference type="PIR" id="G65049">
    <property type="entry name" value="RQECA"/>
</dbReference>
<dbReference type="RefSeq" id="NP_417179.1">
    <property type="nucleotide sequence ID" value="NC_000913.3"/>
</dbReference>
<dbReference type="RefSeq" id="WP_000963143.1">
    <property type="nucleotide sequence ID" value="NZ_STEB01000027.1"/>
</dbReference>
<dbReference type="PDB" id="1AA3">
    <property type="method" value="NMR"/>
    <property type="chains" value="A=269-331"/>
</dbReference>
<dbReference type="PDB" id="1N03">
    <property type="method" value="EM"/>
    <property type="resolution" value="20.00 A"/>
    <property type="chains" value="A/B/C/D/E/F/G=2-353"/>
</dbReference>
<dbReference type="PDB" id="1REA">
    <property type="method" value="X-ray"/>
    <property type="resolution" value="2.70 A"/>
    <property type="chains" value="A=2-353"/>
</dbReference>
<dbReference type="PDB" id="1U94">
    <property type="method" value="X-ray"/>
    <property type="resolution" value="1.90 A"/>
    <property type="chains" value="A=2-353"/>
</dbReference>
<dbReference type="PDB" id="1U98">
    <property type="method" value="X-ray"/>
    <property type="resolution" value="2.00 A"/>
    <property type="chains" value="A=2-353"/>
</dbReference>
<dbReference type="PDB" id="1U99">
    <property type="method" value="X-ray"/>
    <property type="resolution" value="2.60 A"/>
    <property type="chains" value="A=2-353"/>
</dbReference>
<dbReference type="PDB" id="1XMS">
    <property type="method" value="X-ray"/>
    <property type="resolution" value="2.10 A"/>
    <property type="chains" value="A=2-353"/>
</dbReference>
<dbReference type="PDB" id="1XMV">
    <property type="method" value="X-ray"/>
    <property type="resolution" value="1.90 A"/>
    <property type="chains" value="A=2-353"/>
</dbReference>
<dbReference type="PDB" id="2REB">
    <property type="method" value="X-ray"/>
    <property type="resolution" value="2.30 A"/>
    <property type="chains" value="A=2-353"/>
</dbReference>
<dbReference type="PDB" id="2REC">
    <property type="method" value="EM"/>
    <property type="chains" value="A/B/C/D/E/F=1-353"/>
</dbReference>
<dbReference type="PDB" id="3CMT">
    <property type="method" value="X-ray"/>
    <property type="resolution" value="3.15 A"/>
    <property type="chains" value="A/D=2-335"/>
</dbReference>
<dbReference type="PDB" id="3CMU">
    <property type="method" value="X-ray"/>
    <property type="resolution" value="4.20 A"/>
    <property type="chains" value="A=2-335"/>
</dbReference>
<dbReference type="PDB" id="3CMV">
    <property type="method" value="X-ray"/>
    <property type="resolution" value="4.30 A"/>
    <property type="chains" value="A/B/C/D/E/F/G/H=2-335"/>
</dbReference>
<dbReference type="PDB" id="3CMW">
    <property type="method" value="X-ray"/>
    <property type="resolution" value="2.80 A"/>
    <property type="chains" value="A/C=2-335"/>
</dbReference>
<dbReference type="PDB" id="3CMX">
    <property type="method" value="X-ray"/>
    <property type="resolution" value="3.40 A"/>
    <property type="chains" value="A/D=2-335"/>
</dbReference>
<dbReference type="PDB" id="4TWZ">
    <property type="method" value="X-ray"/>
    <property type="resolution" value="2.80 A"/>
    <property type="chains" value="A=2-353"/>
</dbReference>
<dbReference type="PDB" id="7JY6">
    <property type="method" value="EM"/>
    <property type="resolution" value="2.50 A"/>
    <property type="chains" value="A/B/C/D/E/F/G/H/I=1-334"/>
</dbReference>
<dbReference type="PDB" id="7JY7">
    <property type="method" value="EM"/>
    <property type="resolution" value="2.90 A"/>
    <property type="chains" value="A/B/C/D/E/F/G/H/I=1-334"/>
</dbReference>
<dbReference type="PDB" id="7JY8">
    <property type="method" value="EM"/>
    <property type="resolution" value="2.50 A"/>
    <property type="chains" value="A/B/C/D/E/F/G/H/I=1-334"/>
</dbReference>
<dbReference type="PDB" id="7JY9">
    <property type="method" value="EM"/>
    <property type="resolution" value="2.80 A"/>
    <property type="chains" value="A/B/C/D/E/F/G/H/I=1-334"/>
</dbReference>
<dbReference type="PDB" id="7YWA">
    <property type="method" value="EM"/>
    <property type="resolution" value="3.26 A"/>
    <property type="chains" value="F/G=1-353"/>
</dbReference>
<dbReference type="PDB" id="8GMT">
    <property type="method" value="EM"/>
    <property type="resolution" value="3.31 A"/>
    <property type="chains" value="F/G=1-353"/>
</dbReference>
<dbReference type="PDB" id="8GMU">
    <property type="method" value="EM"/>
    <property type="resolution" value="2.78 A"/>
    <property type="chains" value="F/G=1-353"/>
</dbReference>
<dbReference type="PDB" id="8TRG">
    <property type="method" value="EM"/>
    <property type="resolution" value="2.93 A"/>
    <property type="chains" value="A/B/C/D/E/F/G/H=1-353"/>
</dbReference>
<dbReference type="PDBsum" id="1AA3"/>
<dbReference type="PDBsum" id="1N03"/>
<dbReference type="PDBsum" id="1REA"/>
<dbReference type="PDBsum" id="1U94"/>
<dbReference type="PDBsum" id="1U98"/>
<dbReference type="PDBsum" id="1U99"/>
<dbReference type="PDBsum" id="1XMS"/>
<dbReference type="PDBsum" id="1XMV"/>
<dbReference type="PDBsum" id="2REB"/>
<dbReference type="PDBsum" id="2REC"/>
<dbReference type="PDBsum" id="3CMT"/>
<dbReference type="PDBsum" id="3CMU"/>
<dbReference type="PDBsum" id="3CMV"/>
<dbReference type="PDBsum" id="3CMW"/>
<dbReference type="PDBsum" id="3CMX"/>
<dbReference type="PDBsum" id="4TWZ"/>
<dbReference type="PDBsum" id="7JY6"/>
<dbReference type="PDBsum" id="7JY7"/>
<dbReference type="PDBsum" id="7JY8"/>
<dbReference type="PDBsum" id="7JY9"/>
<dbReference type="PDBsum" id="7YWA"/>
<dbReference type="PDBsum" id="8GMT"/>
<dbReference type="PDBsum" id="8GMU"/>
<dbReference type="PDBsum" id="8TRG"/>
<dbReference type="EMDB" id="EMD-34154"/>
<dbReference type="EMDB" id="EMD-41579"/>
<dbReference type="SMR" id="P0A7G6"/>
<dbReference type="BioGRID" id="4259218">
    <property type="interactions" value="472"/>
</dbReference>
<dbReference type="BioGRID" id="851502">
    <property type="interactions" value="2"/>
</dbReference>
<dbReference type="ComplexPortal" id="CPX-5544">
    <property type="entry name" value="DNA polymerase V mutasome complex"/>
</dbReference>
<dbReference type="DIP" id="DIP-31832N"/>
<dbReference type="FunCoup" id="P0A7G6">
    <property type="interactions" value="726"/>
</dbReference>
<dbReference type="IntAct" id="P0A7G6">
    <property type="interactions" value="33"/>
</dbReference>
<dbReference type="STRING" id="511145.b2699"/>
<dbReference type="BindingDB" id="P0A7G6"/>
<dbReference type="ChEMBL" id="CHEMBL3434"/>
<dbReference type="MetOSite" id="P0A7G6"/>
<dbReference type="jPOST" id="P0A7G6"/>
<dbReference type="PaxDb" id="511145-b2699"/>
<dbReference type="EnsemblBacteria" id="AAC75741">
    <property type="protein sequence ID" value="AAC75741"/>
    <property type="gene ID" value="b2699"/>
</dbReference>
<dbReference type="GeneID" id="93779312"/>
<dbReference type="GeneID" id="947170"/>
<dbReference type="KEGG" id="ecj:JW2669"/>
<dbReference type="KEGG" id="eco:b2699"/>
<dbReference type="KEGG" id="ecoc:C3026_14860"/>
<dbReference type="PATRIC" id="fig|1411691.4.peg.4043"/>
<dbReference type="EchoBASE" id="EB0816"/>
<dbReference type="eggNOG" id="COG0468">
    <property type="taxonomic scope" value="Bacteria"/>
</dbReference>
<dbReference type="HOGENOM" id="CLU_040469_3_2_6"/>
<dbReference type="InParanoid" id="P0A7G6"/>
<dbReference type="OMA" id="DSKMGLH"/>
<dbReference type="PhylomeDB" id="P0A7G6"/>
<dbReference type="BioCyc" id="EcoCyc:EG10823-MONOMER"/>
<dbReference type="BioCyc" id="MetaCyc:EG10823-MONOMER"/>
<dbReference type="EvolutionaryTrace" id="P0A7G6"/>
<dbReference type="PRO" id="PR:P0A7G6"/>
<dbReference type="Proteomes" id="UP000000625">
    <property type="component" value="Chromosome"/>
</dbReference>
<dbReference type="GO" id="GO:0005737">
    <property type="term" value="C:cytoplasm"/>
    <property type="evidence" value="ECO:0000305"/>
    <property type="project" value="EcoCyc"/>
</dbReference>
<dbReference type="GO" id="GO:0009355">
    <property type="term" value="C:DNA polymerase V complex"/>
    <property type="evidence" value="ECO:0000353"/>
    <property type="project" value="ComplexPortal"/>
</dbReference>
<dbReference type="GO" id="GO:0005524">
    <property type="term" value="F:ATP binding"/>
    <property type="evidence" value="ECO:0007669"/>
    <property type="project" value="UniProtKB-UniRule"/>
</dbReference>
<dbReference type="GO" id="GO:0016887">
    <property type="term" value="F:ATP hydrolysis activity"/>
    <property type="evidence" value="ECO:0007669"/>
    <property type="project" value="InterPro"/>
</dbReference>
<dbReference type="GO" id="GO:0008094">
    <property type="term" value="F:ATP-dependent activity, acting on DNA"/>
    <property type="evidence" value="ECO:0000314"/>
    <property type="project" value="EcoCyc"/>
</dbReference>
<dbReference type="GO" id="GO:0140664">
    <property type="term" value="F:ATP-dependent DNA damage sensor activity"/>
    <property type="evidence" value="ECO:0007669"/>
    <property type="project" value="InterPro"/>
</dbReference>
<dbReference type="GO" id="GO:0003684">
    <property type="term" value="F:damaged DNA binding"/>
    <property type="evidence" value="ECO:0007669"/>
    <property type="project" value="UniProtKB-UniRule"/>
</dbReference>
<dbReference type="GO" id="GO:0140297">
    <property type="term" value="F:DNA-binding transcription factor binding"/>
    <property type="evidence" value="ECO:0000353"/>
    <property type="project" value="EcoCyc"/>
</dbReference>
<dbReference type="GO" id="GO:0003697">
    <property type="term" value="F:single-stranded DNA binding"/>
    <property type="evidence" value="ECO:0000314"/>
    <property type="project" value="EcoliWiki"/>
</dbReference>
<dbReference type="GO" id="GO:0048870">
    <property type="term" value="P:cell motility"/>
    <property type="evidence" value="ECO:0000315"/>
    <property type="project" value="EcoliWiki"/>
</dbReference>
<dbReference type="GO" id="GO:0006974">
    <property type="term" value="P:DNA damage response"/>
    <property type="evidence" value="ECO:0000270"/>
    <property type="project" value="EcoliWiki"/>
</dbReference>
<dbReference type="GO" id="GO:0006310">
    <property type="term" value="P:DNA recombination"/>
    <property type="evidence" value="ECO:0000315"/>
    <property type="project" value="CACAO"/>
</dbReference>
<dbReference type="GO" id="GO:0035825">
    <property type="term" value="P:homologous recombination"/>
    <property type="evidence" value="ECO:0000304"/>
    <property type="project" value="EcoCyc"/>
</dbReference>
<dbReference type="GO" id="GO:0000725">
    <property type="term" value="P:recombinational repair"/>
    <property type="evidence" value="ECO:0000304"/>
    <property type="project" value="EcoCyc"/>
</dbReference>
<dbReference type="GO" id="GO:0010212">
    <property type="term" value="P:response to ionizing radiation"/>
    <property type="evidence" value="ECO:0000315"/>
    <property type="project" value="EcoCyc"/>
</dbReference>
<dbReference type="GO" id="GO:0009432">
    <property type="term" value="P:SOS response"/>
    <property type="evidence" value="ECO:0000314"/>
    <property type="project" value="ComplexPortal"/>
</dbReference>
<dbReference type="GO" id="GO:0019985">
    <property type="term" value="P:translesion synthesis"/>
    <property type="evidence" value="ECO:0000314"/>
    <property type="project" value="ComplexPortal"/>
</dbReference>
<dbReference type="CDD" id="cd00983">
    <property type="entry name" value="RecA"/>
    <property type="match status" value="1"/>
</dbReference>
<dbReference type="FunFam" id="3.40.50.300:FF:000087">
    <property type="entry name" value="Recombinase RecA"/>
    <property type="match status" value="1"/>
</dbReference>
<dbReference type="Gene3D" id="3.40.50.300">
    <property type="entry name" value="P-loop containing nucleotide triphosphate hydrolases"/>
    <property type="match status" value="1"/>
</dbReference>
<dbReference type="HAMAP" id="MF_00268">
    <property type="entry name" value="RecA"/>
    <property type="match status" value="1"/>
</dbReference>
<dbReference type="InterPro" id="IPR003593">
    <property type="entry name" value="AAA+_ATPase"/>
</dbReference>
<dbReference type="InterPro" id="IPR013765">
    <property type="entry name" value="DNA_recomb/repair_RecA"/>
</dbReference>
<dbReference type="InterPro" id="IPR020584">
    <property type="entry name" value="DNA_recomb/repair_RecA_CS"/>
</dbReference>
<dbReference type="InterPro" id="IPR027417">
    <property type="entry name" value="P-loop_NTPase"/>
</dbReference>
<dbReference type="InterPro" id="IPR049261">
    <property type="entry name" value="RecA-like_C"/>
</dbReference>
<dbReference type="InterPro" id="IPR049428">
    <property type="entry name" value="RecA-like_N"/>
</dbReference>
<dbReference type="InterPro" id="IPR020588">
    <property type="entry name" value="RecA_ATP-bd"/>
</dbReference>
<dbReference type="InterPro" id="IPR023400">
    <property type="entry name" value="RecA_C_sf"/>
</dbReference>
<dbReference type="InterPro" id="IPR020587">
    <property type="entry name" value="RecA_monomer-monomer_interface"/>
</dbReference>
<dbReference type="NCBIfam" id="TIGR02012">
    <property type="entry name" value="tigrfam_recA"/>
    <property type="match status" value="1"/>
</dbReference>
<dbReference type="PANTHER" id="PTHR45900:SF1">
    <property type="entry name" value="MITOCHONDRIAL DNA REPAIR PROTEIN RECA HOMOLOG-RELATED"/>
    <property type="match status" value="1"/>
</dbReference>
<dbReference type="PANTHER" id="PTHR45900">
    <property type="entry name" value="RECA"/>
    <property type="match status" value="1"/>
</dbReference>
<dbReference type="Pfam" id="PF00154">
    <property type="entry name" value="RecA"/>
    <property type="match status" value="1"/>
</dbReference>
<dbReference type="Pfam" id="PF21096">
    <property type="entry name" value="RecA_C"/>
    <property type="match status" value="1"/>
</dbReference>
<dbReference type="PRINTS" id="PR00142">
    <property type="entry name" value="RECA"/>
</dbReference>
<dbReference type="SMART" id="SM00382">
    <property type="entry name" value="AAA"/>
    <property type="match status" value="1"/>
</dbReference>
<dbReference type="SUPFAM" id="SSF52540">
    <property type="entry name" value="P-loop containing nucleoside triphosphate hydrolases"/>
    <property type="match status" value="1"/>
</dbReference>
<dbReference type="SUPFAM" id="SSF54752">
    <property type="entry name" value="RecA protein, C-terminal domain"/>
    <property type="match status" value="1"/>
</dbReference>
<dbReference type="PROSITE" id="PS00321">
    <property type="entry name" value="RECA_1"/>
    <property type="match status" value="1"/>
</dbReference>
<dbReference type="PROSITE" id="PS50162">
    <property type="entry name" value="RECA_2"/>
    <property type="match status" value="1"/>
</dbReference>
<dbReference type="PROSITE" id="PS50163">
    <property type="entry name" value="RECA_3"/>
    <property type="match status" value="1"/>
</dbReference>
<feature type="initiator methionine" description="Removed" evidence="11 12">
    <location>
        <position position="1"/>
    </location>
</feature>
<feature type="chain" id="PRO_0000122703" description="Protein RecA">
    <location>
        <begin position="2"/>
        <end position="353"/>
    </location>
</feature>
<feature type="region of interest" description="Disordered" evidence="2">
    <location>
        <begin position="330"/>
        <end position="353"/>
    </location>
</feature>
<feature type="compositionally biased region" description="Acidic residues" evidence="2">
    <location>
        <begin position="339"/>
        <end position="353"/>
    </location>
</feature>
<feature type="binding site" evidence="1 6">
    <location>
        <begin position="67"/>
        <end position="74"/>
    </location>
    <ligand>
        <name>ATP</name>
        <dbReference type="ChEBI" id="CHEBI:30616"/>
    </ligand>
</feature>
<feature type="mutagenesis site" description="10-fold increased survival following 3000 Gy ionizing radiation." evidence="9">
    <original>D</original>
    <variation>A</variation>
    <location>
        <position position="277"/>
    </location>
</feature>
<feature type="sequence conflict" description="In Ref. 8; AA sequence." evidence="16" ref="8">
    <location>
        <position position="191"/>
    </location>
</feature>
<feature type="helix" evidence="17">
    <location>
        <begin position="8"/>
        <end position="22"/>
    </location>
</feature>
<feature type="helix" evidence="18">
    <location>
        <begin position="24"/>
        <end position="26"/>
    </location>
</feature>
<feature type="strand" evidence="19">
    <location>
        <begin position="27"/>
        <end position="29"/>
    </location>
</feature>
<feature type="helix" evidence="20">
    <location>
        <begin position="30"/>
        <end position="32"/>
    </location>
</feature>
<feature type="helix" evidence="20">
    <location>
        <begin position="34"/>
        <end position="36"/>
    </location>
</feature>
<feature type="helix" evidence="17">
    <location>
        <begin position="46"/>
        <end position="51"/>
    </location>
</feature>
<feature type="strand" evidence="17">
    <location>
        <begin position="53"/>
        <end position="58"/>
    </location>
</feature>
<feature type="strand" evidence="17">
    <location>
        <begin position="61"/>
        <end position="66"/>
    </location>
</feature>
<feature type="helix" evidence="17">
    <location>
        <begin position="73"/>
        <end position="86"/>
    </location>
</feature>
<feature type="strand" evidence="17">
    <location>
        <begin position="91"/>
        <end position="97"/>
    </location>
</feature>
<feature type="helix" evidence="17">
    <location>
        <begin position="102"/>
        <end position="107"/>
    </location>
</feature>
<feature type="helix" evidence="17">
    <location>
        <begin position="112"/>
        <end position="114"/>
    </location>
</feature>
<feature type="strand" evidence="17">
    <location>
        <begin position="116"/>
        <end position="118"/>
    </location>
</feature>
<feature type="helix" evidence="17">
    <location>
        <begin position="123"/>
        <end position="136"/>
    </location>
</feature>
<feature type="strand" evidence="17">
    <location>
        <begin position="140"/>
        <end position="145"/>
    </location>
</feature>
<feature type="helix" evidence="17">
    <location>
        <begin position="147"/>
        <end position="149"/>
    </location>
</feature>
<feature type="helix" evidence="17">
    <location>
        <begin position="153"/>
        <end position="156"/>
    </location>
</feature>
<feature type="helix" evidence="17">
    <location>
        <begin position="167"/>
        <end position="186"/>
    </location>
</feature>
<feature type="strand" evidence="17">
    <location>
        <begin position="189"/>
        <end position="194"/>
    </location>
</feature>
<feature type="strand" evidence="22">
    <location>
        <begin position="196"/>
        <end position="198"/>
    </location>
</feature>
<feature type="strand" evidence="21">
    <location>
        <begin position="203"/>
        <end position="205"/>
    </location>
</feature>
<feature type="strand" evidence="20">
    <location>
        <begin position="208"/>
        <end position="212"/>
    </location>
</feature>
<feature type="helix" evidence="17">
    <location>
        <begin position="214"/>
        <end position="219"/>
    </location>
</feature>
<feature type="strand" evidence="17">
    <location>
        <begin position="221"/>
        <end position="253"/>
    </location>
</feature>
<feature type="strand" evidence="17">
    <location>
        <begin position="258"/>
        <end position="264"/>
    </location>
</feature>
<feature type="turn" evidence="17">
    <location>
        <begin position="265"/>
        <end position="267"/>
    </location>
</feature>
<feature type="helix" evidence="17">
    <location>
        <begin position="271"/>
        <end position="281"/>
    </location>
</feature>
<feature type="strand" evidence="17">
    <location>
        <begin position="284"/>
        <end position="286"/>
    </location>
</feature>
<feature type="strand" evidence="17">
    <location>
        <begin position="292"/>
        <end position="294"/>
    </location>
</feature>
<feature type="strand" evidence="17">
    <location>
        <begin position="297"/>
        <end position="302"/>
    </location>
</feature>
<feature type="helix" evidence="17">
    <location>
        <begin position="303"/>
        <end position="312"/>
    </location>
</feature>
<feature type="helix" evidence="17">
    <location>
        <begin position="314"/>
        <end position="328"/>
    </location>
</feature>
<organism>
    <name type="scientific">Escherichia coli (strain K12)</name>
    <dbReference type="NCBI Taxonomy" id="83333"/>
    <lineage>
        <taxon>Bacteria</taxon>
        <taxon>Pseudomonadati</taxon>
        <taxon>Pseudomonadota</taxon>
        <taxon>Gammaproteobacteria</taxon>
        <taxon>Enterobacterales</taxon>
        <taxon>Enterobacteriaceae</taxon>
        <taxon>Escherichia</taxon>
    </lineage>
</organism>
<gene>
    <name evidence="1" type="primary">recA</name>
    <name type="synonym">lexB</name>
    <name type="synonym">recH</name>
    <name type="synonym">rnmB</name>
    <name type="synonym">tif</name>
    <name type="synonym">umuB</name>
    <name type="synonym">zab</name>
    <name type="ordered locus">b2699</name>
    <name type="ordered locus">JW2669</name>
</gene>